<gene>
    <name evidence="1" type="primary">glmU</name>
    <name type="ordered locus">Mmar10_0970</name>
</gene>
<keyword id="KW-0012">Acyltransferase</keyword>
<keyword id="KW-0133">Cell shape</keyword>
<keyword id="KW-0961">Cell wall biogenesis/degradation</keyword>
<keyword id="KW-0963">Cytoplasm</keyword>
<keyword id="KW-0460">Magnesium</keyword>
<keyword id="KW-0479">Metal-binding</keyword>
<keyword id="KW-0511">Multifunctional enzyme</keyword>
<keyword id="KW-0548">Nucleotidyltransferase</keyword>
<keyword id="KW-0573">Peptidoglycan synthesis</keyword>
<keyword id="KW-1185">Reference proteome</keyword>
<keyword id="KW-0677">Repeat</keyword>
<keyword id="KW-0808">Transferase</keyword>
<dbReference type="EC" id="2.7.7.23" evidence="1"/>
<dbReference type="EC" id="2.3.1.157" evidence="1"/>
<dbReference type="EMBL" id="CP000449">
    <property type="protein sequence ID" value="ABI65263.1"/>
    <property type="molecule type" value="Genomic_DNA"/>
</dbReference>
<dbReference type="RefSeq" id="WP_011642910.1">
    <property type="nucleotide sequence ID" value="NC_008347.1"/>
</dbReference>
<dbReference type="SMR" id="Q0AR24"/>
<dbReference type="STRING" id="394221.Mmar10_0970"/>
<dbReference type="KEGG" id="mmr:Mmar10_0970"/>
<dbReference type="eggNOG" id="COG1207">
    <property type="taxonomic scope" value="Bacteria"/>
</dbReference>
<dbReference type="HOGENOM" id="CLU_029499_15_2_5"/>
<dbReference type="OrthoDB" id="9775031at2"/>
<dbReference type="UniPathway" id="UPA00113">
    <property type="reaction ID" value="UER00532"/>
</dbReference>
<dbReference type="UniPathway" id="UPA00113">
    <property type="reaction ID" value="UER00533"/>
</dbReference>
<dbReference type="UniPathway" id="UPA00973"/>
<dbReference type="Proteomes" id="UP000001964">
    <property type="component" value="Chromosome"/>
</dbReference>
<dbReference type="GO" id="GO:0005737">
    <property type="term" value="C:cytoplasm"/>
    <property type="evidence" value="ECO:0007669"/>
    <property type="project" value="UniProtKB-SubCell"/>
</dbReference>
<dbReference type="GO" id="GO:0016020">
    <property type="term" value="C:membrane"/>
    <property type="evidence" value="ECO:0007669"/>
    <property type="project" value="GOC"/>
</dbReference>
<dbReference type="GO" id="GO:0019134">
    <property type="term" value="F:glucosamine-1-phosphate N-acetyltransferase activity"/>
    <property type="evidence" value="ECO:0007669"/>
    <property type="project" value="UniProtKB-UniRule"/>
</dbReference>
<dbReference type="GO" id="GO:0000287">
    <property type="term" value="F:magnesium ion binding"/>
    <property type="evidence" value="ECO:0007669"/>
    <property type="project" value="UniProtKB-UniRule"/>
</dbReference>
<dbReference type="GO" id="GO:0003977">
    <property type="term" value="F:UDP-N-acetylglucosamine diphosphorylase activity"/>
    <property type="evidence" value="ECO:0007669"/>
    <property type="project" value="UniProtKB-UniRule"/>
</dbReference>
<dbReference type="GO" id="GO:0000902">
    <property type="term" value="P:cell morphogenesis"/>
    <property type="evidence" value="ECO:0007669"/>
    <property type="project" value="UniProtKB-UniRule"/>
</dbReference>
<dbReference type="GO" id="GO:0071555">
    <property type="term" value="P:cell wall organization"/>
    <property type="evidence" value="ECO:0007669"/>
    <property type="project" value="UniProtKB-KW"/>
</dbReference>
<dbReference type="GO" id="GO:0009245">
    <property type="term" value="P:lipid A biosynthetic process"/>
    <property type="evidence" value="ECO:0007669"/>
    <property type="project" value="UniProtKB-UniRule"/>
</dbReference>
<dbReference type="GO" id="GO:0009252">
    <property type="term" value="P:peptidoglycan biosynthetic process"/>
    <property type="evidence" value="ECO:0007669"/>
    <property type="project" value="UniProtKB-UniRule"/>
</dbReference>
<dbReference type="GO" id="GO:0008360">
    <property type="term" value="P:regulation of cell shape"/>
    <property type="evidence" value="ECO:0007669"/>
    <property type="project" value="UniProtKB-KW"/>
</dbReference>
<dbReference type="GO" id="GO:0006048">
    <property type="term" value="P:UDP-N-acetylglucosamine biosynthetic process"/>
    <property type="evidence" value="ECO:0007669"/>
    <property type="project" value="UniProtKB-UniPathway"/>
</dbReference>
<dbReference type="CDD" id="cd02540">
    <property type="entry name" value="GT2_GlmU_N_bac"/>
    <property type="match status" value="1"/>
</dbReference>
<dbReference type="CDD" id="cd03353">
    <property type="entry name" value="LbH_GlmU_C"/>
    <property type="match status" value="1"/>
</dbReference>
<dbReference type="Gene3D" id="2.160.10.10">
    <property type="entry name" value="Hexapeptide repeat proteins"/>
    <property type="match status" value="1"/>
</dbReference>
<dbReference type="Gene3D" id="3.90.550.10">
    <property type="entry name" value="Spore Coat Polysaccharide Biosynthesis Protein SpsA, Chain A"/>
    <property type="match status" value="1"/>
</dbReference>
<dbReference type="HAMAP" id="MF_01631">
    <property type="entry name" value="GlmU"/>
    <property type="match status" value="1"/>
</dbReference>
<dbReference type="InterPro" id="IPR005882">
    <property type="entry name" value="Bifunctional_GlmU"/>
</dbReference>
<dbReference type="InterPro" id="IPR050065">
    <property type="entry name" value="GlmU-like"/>
</dbReference>
<dbReference type="InterPro" id="IPR038009">
    <property type="entry name" value="GlmU_C_LbH"/>
</dbReference>
<dbReference type="InterPro" id="IPR001451">
    <property type="entry name" value="Hexapep"/>
</dbReference>
<dbReference type="InterPro" id="IPR025877">
    <property type="entry name" value="MobA-like_NTP_Trfase"/>
</dbReference>
<dbReference type="InterPro" id="IPR029044">
    <property type="entry name" value="Nucleotide-diphossugar_trans"/>
</dbReference>
<dbReference type="InterPro" id="IPR011004">
    <property type="entry name" value="Trimer_LpxA-like_sf"/>
</dbReference>
<dbReference type="NCBIfam" id="TIGR01173">
    <property type="entry name" value="glmU"/>
    <property type="match status" value="1"/>
</dbReference>
<dbReference type="NCBIfam" id="NF010933">
    <property type="entry name" value="PRK14353.1"/>
    <property type="match status" value="1"/>
</dbReference>
<dbReference type="PANTHER" id="PTHR43584:SF3">
    <property type="entry name" value="BIFUNCTIONAL PROTEIN GLMU"/>
    <property type="match status" value="1"/>
</dbReference>
<dbReference type="PANTHER" id="PTHR43584">
    <property type="entry name" value="NUCLEOTIDYL TRANSFERASE"/>
    <property type="match status" value="1"/>
</dbReference>
<dbReference type="Pfam" id="PF00132">
    <property type="entry name" value="Hexapep"/>
    <property type="match status" value="1"/>
</dbReference>
<dbReference type="Pfam" id="PF14602">
    <property type="entry name" value="Hexapep_2"/>
    <property type="match status" value="1"/>
</dbReference>
<dbReference type="Pfam" id="PF12804">
    <property type="entry name" value="NTP_transf_3"/>
    <property type="match status" value="1"/>
</dbReference>
<dbReference type="SUPFAM" id="SSF53448">
    <property type="entry name" value="Nucleotide-diphospho-sugar transferases"/>
    <property type="match status" value="1"/>
</dbReference>
<dbReference type="SUPFAM" id="SSF51161">
    <property type="entry name" value="Trimeric LpxA-like enzymes"/>
    <property type="match status" value="1"/>
</dbReference>
<evidence type="ECO:0000255" key="1">
    <source>
        <dbReference type="HAMAP-Rule" id="MF_01631"/>
    </source>
</evidence>
<accession>Q0AR24</accession>
<sequence length="452" mass="46878">MSRSRSAIILAAGQGTRMKSKTVKVLHKVAGRPMLDWAVALAGDCGASDIVTVWGAHSPAVRDAAEALGTRTALQDPPKGTGHAVLAARAALADLSGDAIVLYADTPLITAATVARVFEALEGGASVAVLGFEPDDPAAYGRLITNEAGDLDRIVEFKDASEAERAVGLVNSGVLAAPAELLFDLLGEVGNDNANGEYYLTDVVGLARARDLRAAVVVADADEVLGVNSRADLAEAEAAFQSRMRQSMMADGVTLIAPETVFFAHDTQIARDVVIEPNVVFGPGVVIEEDVVVHAHSHIAGAHLKRGAHAGPFARLRPGAELGEGSKVGNFVEIKKSQLAEGAKVSHLTYIGDASVGANANIGAGTITCNYDGYDKHRTVIGDNAFIGSNTCLVAPVTVGDGAFTATGTIVTQDVPADALALARTPQTHKPGWAARFNAAKQARKARKDSQT</sequence>
<comment type="function">
    <text evidence="1">Catalyzes the last two sequential reactions in the de novo biosynthetic pathway for UDP-N-acetylglucosamine (UDP-GlcNAc). The C-terminal domain catalyzes the transfer of acetyl group from acetyl coenzyme A to glucosamine-1-phosphate (GlcN-1-P) to produce N-acetylglucosamine-1-phosphate (GlcNAc-1-P), which is converted into UDP-GlcNAc by the transfer of uridine 5-monophosphate (from uridine 5-triphosphate), a reaction catalyzed by the N-terminal domain.</text>
</comment>
<comment type="catalytic activity">
    <reaction evidence="1">
        <text>alpha-D-glucosamine 1-phosphate + acetyl-CoA = N-acetyl-alpha-D-glucosamine 1-phosphate + CoA + H(+)</text>
        <dbReference type="Rhea" id="RHEA:13725"/>
        <dbReference type="ChEBI" id="CHEBI:15378"/>
        <dbReference type="ChEBI" id="CHEBI:57287"/>
        <dbReference type="ChEBI" id="CHEBI:57288"/>
        <dbReference type="ChEBI" id="CHEBI:57776"/>
        <dbReference type="ChEBI" id="CHEBI:58516"/>
        <dbReference type="EC" id="2.3.1.157"/>
    </reaction>
</comment>
<comment type="catalytic activity">
    <reaction evidence="1">
        <text>N-acetyl-alpha-D-glucosamine 1-phosphate + UTP + H(+) = UDP-N-acetyl-alpha-D-glucosamine + diphosphate</text>
        <dbReference type="Rhea" id="RHEA:13509"/>
        <dbReference type="ChEBI" id="CHEBI:15378"/>
        <dbReference type="ChEBI" id="CHEBI:33019"/>
        <dbReference type="ChEBI" id="CHEBI:46398"/>
        <dbReference type="ChEBI" id="CHEBI:57705"/>
        <dbReference type="ChEBI" id="CHEBI:57776"/>
        <dbReference type="EC" id="2.7.7.23"/>
    </reaction>
</comment>
<comment type="cofactor">
    <cofactor evidence="1">
        <name>Mg(2+)</name>
        <dbReference type="ChEBI" id="CHEBI:18420"/>
    </cofactor>
    <text evidence="1">Binds 1 Mg(2+) ion per subunit.</text>
</comment>
<comment type="pathway">
    <text evidence="1">Nucleotide-sugar biosynthesis; UDP-N-acetyl-alpha-D-glucosamine biosynthesis; N-acetyl-alpha-D-glucosamine 1-phosphate from alpha-D-glucosamine 6-phosphate (route II): step 2/2.</text>
</comment>
<comment type="pathway">
    <text evidence="1">Nucleotide-sugar biosynthesis; UDP-N-acetyl-alpha-D-glucosamine biosynthesis; UDP-N-acetyl-alpha-D-glucosamine from N-acetyl-alpha-D-glucosamine 1-phosphate: step 1/1.</text>
</comment>
<comment type="pathway">
    <text evidence="1">Bacterial outer membrane biogenesis; LPS lipid A biosynthesis.</text>
</comment>
<comment type="subunit">
    <text evidence="1">Homotrimer.</text>
</comment>
<comment type="subcellular location">
    <subcellularLocation>
        <location evidence="1">Cytoplasm</location>
    </subcellularLocation>
</comment>
<comment type="similarity">
    <text evidence="1">In the N-terminal section; belongs to the N-acetylglucosamine-1-phosphate uridyltransferase family.</text>
</comment>
<comment type="similarity">
    <text evidence="1">In the C-terminal section; belongs to the transferase hexapeptide repeat family.</text>
</comment>
<organism>
    <name type="scientific">Maricaulis maris (strain MCS10)</name>
    <name type="common">Caulobacter maris</name>
    <dbReference type="NCBI Taxonomy" id="394221"/>
    <lineage>
        <taxon>Bacteria</taxon>
        <taxon>Pseudomonadati</taxon>
        <taxon>Pseudomonadota</taxon>
        <taxon>Alphaproteobacteria</taxon>
        <taxon>Maricaulales</taxon>
        <taxon>Maricaulaceae</taxon>
        <taxon>Maricaulis</taxon>
    </lineage>
</organism>
<reference key="1">
    <citation type="submission" date="2006-08" db="EMBL/GenBank/DDBJ databases">
        <title>Complete sequence of Maricaulis maris MCS10.</title>
        <authorList>
            <consortium name="US DOE Joint Genome Institute"/>
            <person name="Copeland A."/>
            <person name="Lucas S."/>
            <person name="Lapidus A."/>
            <person name="Barry K."/>
            <person name="Detter J.C."/>
            <person name="Glavina del Rio T."/>
            <person name="Hammon N."/>
            <person name="Israni S."/>
            <person name="Dalin E."/>
            <person name="Tice H."/>
            <person name="Pitluck S."/>
            <person name="Saunders E."/>
            <person name="Brettin T."/>
            <person name="Bruce D."/>
            <person name="Han C."/>
            <person name="Tapia R."/>
            <person name="Gilna P."/>
            <person name="Schmutz J."/>
            <person name="Larimer F."/>
            <person name="Land M."/>
            <person name="Hauser L."/>
            <person name="Kyrpides N."/>
            <person name="Mikhailova N."/>
            <person name="Viollier P."/>
            <person name="Stephens C."/>
            <person name="Richardson P."/>
        </authorList>
    </citation>
    <scope>NUCLEOTIDE SEQUENCE [LARGE SCALE GENOMIC DNA]</scope>
    <source>
        <strain>MCS10</strain>
    </source>
</reference>
<protein>
    <recommendedName>
        <fullName evidence="1">Bifunctional protein GlmU</fullName>
    </recommendedName>
    <domain>
        <recommendedName>
            <fullName evidence="1">UDP-N-acetylglucosamine pyrophosphorylase</fullName>
            <ecNumber evidence="1">2.7.7.23</ecNumber>
        </recommendedName>
        <alternativeName>
            <fullName evidence="1">N-acetylglucosamine-1-phosphate uridyltransferase</fullName>
        </alternativeName>
    </domain>
    <domain>
        <recommendedName>
            <fullName evidence="1">Glucosamine-1-phosphate N-acetyltransferase</fullName>
            <ecNumber evidence="1">2.3.1.157</ecNumber>
        </recommendedName>
    </domain>
</protein>
<feature type="chain" id="PRO_0000263139" description="Bifunctional protein GlmU">
    <location>
        <begin position="1"/>
        <end position="452"/>
    </location>
</feature>
<feature type="region of interest" description="Pyrophosphorylase" evidence="1">
    <location>
        <begin position="1"/>
        <end position="230"/>
    </location>
</feature>
<feature type="region of interest" description="Linker" evidence="1">
    <location>
        <begin position="231"/>
        <end position="251"/>
    </location>
</feature>
<feature type="region of interest" description="N-acetyltransferase" evidence="1">
    <location>
        <begin position="252"/>
        <end position="452"/>
    </location>
</feature>
<feature type="active site" description="Proton acceptor" evidence="1">
    <location>
        <position position="347"/>
    </location>
</feature>
<feature type="binding site" evidence="1">
    <location>
        <begin position="10"/>
        <end position="13"/>
    </location>
    <ligand>
        <name>UDP-N-acetyl-alpha-D-glucosamine</name>
        <dbReference type="ChEBI" id="CHEBI:57705"/>
    </ligand>
</feature>
<feature type="binding site" evidence="1">
    <location>
        <position position="24"/>
    </location>
    <ligand>
        <name>UDP-N-acetyl-alpha-D-glucosamine</name>
        <dbReference type="ChEBI" id="CHEBI:57705"/>
    </ligand>
</feature>
<feature type="binding site" evidence="1">
    <location>
        <position position="75"/>
    </location>
    <ligand>
        <name>UDP-N-acetyl-alpha-D-glucosamine</name>
        <dbReference type="ChEBI" id="CHEBI:57705"/>
    </ligand>
</feature>
<feature type="binding site" evidence="1">
    <location>
        <begin position="80"/>
        <end position="81"/>
    </location>
    <ligand>
        <name>UDP-N-acetyl-alpha-D-glucosamine</name>
        <dbReference type="ChEBI" id="CHEBI:57705"/>
    </ligand>
</feature>
<feature type="binding site" evidence="1">
    <location>
        <position position="105"/>
    </location>
    <ligand>
        <name>Mg(2+)</name>
        <dbReference type="ChEBI" id="CHEBI:18420"/>
    </ligand>
</feature>
<feature type="binding site" evidence="1">
    <location>
        <position position="141"/>
    </location>
    <ligand>
        <name>UDP-N-acetyl-alpha-D-glucosamine</name>
        <dbReference type="ChEBI" id="CHEBI:57705"/>
    </ligand>
</feature>
<feature type="binding site" evidence="1">
    <location>
        <position position="156"/>
    </location>
    <ligand>
        <name>UDP-N-acetyl-alpha-D-glucosamine</name>
        <dbReference type="ChEBI" id="CHEBI:57705"/>
    </ligand>
</feature>
<feature type="binding site" evidence="1">
    <location>
        <position position="171"/>
    </location>
    <ligand>
        <name>UDP-N-acetyl-alpha-D-glucosamine</name>
        <dbReference type="ChEBI" id="CHEBI:57705"/>
    </ligand>
</feature>
<feature type="binding site" evidence="1">
    <location>
        <position position="228"/>
    </location>
    <ligand>
        <name>Mg(2+)</name>
        <dbReference type="ChEBI" id="CHEBI:18420"/>
    </ligand>
</feature>
<feature type="binding site" evidence="1">
    <location>
        <position position="228"/>
    </location>
    <ligand>
        <name>UDP-N-acetyl-alpha-D-glucosamine</name>
        <dbReference type="ChEBI" id="CHEBI:57705"/>
    </ligand>
</feature>
<feature type="binding site" evidence="1">
    <location>
        <position position="317"/>
    </location>
    <ligand>
        <name>UDP-N-acetyl-alpha-D-glucosamine</name>
        <dbReference type="ChEBI" id="CHEBI:57705"/>
    </ligand>
</feature>
<feature type="binding site" evidence="1">
    <location>
        <position position="335"/>
    </location>
    <ligand>
        <name>UDP-N-acetyl-alpha-D-glucosamine</name>
        <dbReference type="ChEBI" id="CHEBI:57705"/>
    </ligand>
</feature>
<feature type="binding site" evidence="1">
    <location>
        <position position="350"/>
    </location>
    <ligand>
        <name>UDP-N-acetyl-alpha-D-glucosamine</name>
        <dbReference type="ChEBI" id="CHEBI:57705"/>
    </ligand>
</feature>
<feature type="binding site" evidence="1">
    <location>
        <position position="361"/>
    </location>
    <ligand>
        <name>UDP-N-acetyl-alpha-D-glucosamine</name>
        <dbReference type="ChEBI" id="CHEBI:57705"/>
    </ligand>
</feature>
<feature type="binding site" evidence="1">
    <location>
        <position position="364"/>
    </location>
    <ligand>
        <name>acetyl-CoA</name>
        <dbReference type="ChEBI" id="CHEBI:57288"/>
    </ligand>
</feature>
<feature type="binding site" evidence="1">
    <location>
        <begin position="370"/>
        <end position="371"/>
    </location>
    <ligand>
        <name>acetyl-CoA</name>
        <dbReference type="ChEBI" id="CHEBI:57288"/>
    </ligand>
</feature>
<feature type="binding site" evidence="1">
    <location>
        <position position="389"/>
    </location>
    <ligand>
        <name>acetyl-CoA</name>
        <dbReference type="ChEBI" id="CHEBI:57288"/>
    </ligand>
</feature>
<feature type="binding site" evidence="1">
    <location>
        <position position="407"/>
    </location>
    <ligand>
        <name>acetyl-CoA</name>
        <dbReference type="ChEBI" id="CHEBI:57288"/>
    </ligand>
</feature>
<feature type="binding site" evidence="1">
    <location>
        <position position="424"/>
    </location>
    <ligand>
        <name>acetyl-CoA</name>
        <dbReference type="ChEBI" id="CHEBI:57288"/>
    </ligand>
</feature>
<proteinExistence type="inferred from homology"/>
<name>GLMU_MARMM</name>